<accession>Q2FH83</accession>
<comment type="similarity">
    <text evidence="1">Belongs to the HesB/IscA family.</text>
</comment>
<evidence type="ECO:0000305" key="1"/>
<sequence length="98" mass="11496">MQIELTDAAVTWFKNELELPENNKVLVFFVRYGGEFQLKQGFSPAFTVEPKEDVDIGYEQQYDDLNVVVAEKDLWYFEDDHIIVNVVDHEDEISYSTK</sequence>
<name>Y1248_STAA3</name>
<organism>
    <name type="scientific">Staphylococcus aureus (strain USA300)</name>
    <dbReference type="NCBI Taxonomy" id="367830"/>
    <lineage>
        <taxon>Bacteria</taxon>
        <taxon>Bacillati</taxon>
        <taxon>Bacillota</taxon>
        <taxon>Bacilli</taxon>
        <taxon>Bacillales</taxon>
        <taxon>Staphylococcaceae</taxon>
        <taxon>Staphylococcus</taxon>
    </lineage>
</organism>
<dbReference type="EMBL" id="CP000255">
    <property type="protein sequence ID" value="ABD21702.1"/>
    <property type="molecule type" value="Genomic_DNA"/>
</dbReference>
<dbReference type="RefSeq" id="WP_001165377.1">
    <property type="nucleotide sequence ID" value="NZ_CP027476.1"/>
</dbReference>
<dbReference type="SMR" id="Q2FH83"/>
<dbReference type="KEGG" id="saa:SAUSA300_1248"/>
<dbReference type="HOGENOM" id="CLU_163967_0_0_9"/>
<dbReference type="OMA" id="VLQFYVR"/>
<dbReference type="Proteomes" id="UP000001939">
    <property type="component" value="Chromosome"/>
</dbReference>
<dbReference type="InterPro" id="IPR035903">
    <property type="entry name" value="HesB-like_dom_sf"/>
</dbReference>
<dbReference type="InterPro" id="IPR008326">
    <property type="entry name" value="PdhI-like"/>
</dbReference>
<dbReference type="PIRSF" id="PIRSF034852">
    <property type="entry name" value="UCP034852"/>
    <property type="match status" value="1"/>
</dbReference>
<dbReference type="SUPFAM" id="SSF89360">
    <property type="entry name" value="HesB-like domain"/>
    <property type="match status" value="1"/>
</dbReference>
<gene>
    <name type="ordered locus">SAUSA300_1248</name>
</gene>
<reference key="1">
    <citation type="journal article" date="2006" name="Lancet">
        <title>Complete genome sequence of USA300, an epidemic clone of community-acquired meticillin-resistant Staphylococcus aureus.</title>
        <authorList>
            <person name="Diep B.A."/>
            <person name="Gill S.R."/>
            <person name="Chang R.F."/>
            <person name="Phan T.H."/>
            <person name="Chen J.H."/>
            <person name="Davidson M.G."/>
            <person name="Lin F."/>
            <person name="Lin J."/>
            <person name="Carleton H.A."/>
            <person name="Mongodin E.F."/>
            <person name="Sensabaugh G.F."/>
            <person name="Perdreau-Remington F."/>
        </authorList>
    </citation>
    <scope>NUCLEOTIDE SEQUENCE [LARGE SCALE GENOMIC DNA]</scope>
    <source>
        <strain>USA300</strain>
    </source>
</reference>
<feature type="chain" id="PRO_0000300080" description="Uncharacterized protein SAUSA300_1248">
    <location>
        <begin position="1"/>
        <end position="98"/>
    </location>
</feature>
<protein>
    <recommendedName>
        <fullName>Uncharacterized protein SAUSA300_1248</fullName>
    </recommendedName>
</protein>
<proteinExistence type="inferred from homology"/>